<name>HTPG_BURTA</name>
<protein>
    <recommendedName>
        <fullName evidence="1">Chaperone protein HtpG</fullName>
    </recommendedName>
    <alternativeName>
        <fullName evidence="1">Heat shock protein HtpG</fullName>
    </alternativeName>
    <alternativeName>
        <fullName evidence="1">High temperature protein G</fullName>
    </alternativeName>
</protein>
<keyword id="KW-0067">ATP-binding</keyword>
<keyword id="KW-0143">Chaperone</keyword>
<keyword id="KW-0963">Cytoplasm</keyword>
<keyword id="KW-0547">Nucleotide-binding</keyword>
<keyword id="KW-0346">Stress response</keyword>
<comment type="function">
    <text evidence="1">Molecular chaperone. Has ATPase activity.</text>
</comment>
<comment type="subunit">
    <text evidence="1">Homodimer.</text>
</comment>
<comment type="subcellular location">
    <subcellularLocation>
        <location evidence="1">Cytoplasm</location>
    </subcellularLocation>
</comment>
<comment type="similarity">
    <text evidence="1">Belongs to the heat shock protein 90 family.</text>
</comment>
<evidence type="ECO:0000255" key="1">
    <source>
        <dbReference type="HAMAP-Rule" id="MF_00505"/>
    </source>
</evidence>
<reference key="1">
    <citation type="journal article" date="2005" name="BMC Genomics">
        <title>Bacterial genome adaptation to niches: divergence of the potential virulence genes in three Burkholderia species of different survival strategies.</title>
        <authorList>
            <person name="Kim H.S."/>
            <person name="Schell M.A."/>
            <person name="Yu Y."/>
            <person name="Ulrich R.L."/>
            <person name="Sarria S.H."/>
            <person name="Nierman W.C."/>
            <person name="DeShazer D."/>
        </authorList>
    </citation>
    <scope>NUCLEOTIDE SEQUENCE [LARGE SCALE GENOMIC DNA]</scope>
    <source>
        <strain>ATCC 700388 / DSM 13276 / CCUG 48851 / CIP 106301 / E264</strain>
    </source>
</reference>
<gene>
    <name evidence="1" type="primary">htpG</name>
    <name type="ordered locus">BTH_I0955</name>
</gene>
<organism>
    <name type="scientific">Burkholderia thailandensis (strain ATCC 700388 / DSM 13276 / CCUG 48851 / CIP 106301 / E264)</name>
    <dbReference type="NCBI Taxonomy" id="271848"/>
    <lineage>
        <taxon>Bacteria</taxon>
        <taxon>Pseudomonadati</taxon>
        <taxon>Pseudomonadota</taxon>
        <taxon>Betaproteobacteria</taxon>
        <taxon>Burkholderiales</taxon>
        <taxon>Burkholderiaceae</taxon>
        <taxon>Burkholderia</taxon>
        <taxon>pseudomallei group</taxon>
    </lineage>
</organism>
<dbReference type="EMBL" id="CP000086">
    <property type="protein sequence ID" value="ABC38457.1"/>
    <property type="molecule type" value="Genomic_DNA"/>
</dbReference>
<dbReference type="RefSeq" id="WP_009892368.1">
    <property type="nucleotide sequence ID" value="NZ_CP008785.1"/>
</dbReference>
<dbReference type="SMR" id="Q2SZZ0"/>
<dbReference type="GeneID" id="45120708"/>
<dbReference type="KEGG" id="bte:BTH_I0955"/>
<dbReference type="HOGENOM" id="CLU_006684_3_0_4"/>
<dbReference type="Proteomes" id="UP000001930">
    <property type="component" value="Chromosome I"/>
</dbReference>
<dbReference type="GO" id="GO:0005737">
    <property type="term" value="C:cytoplasm"/>
    <property type="evidence" value="ECO:0007669"/>
    <property type="project" value="UniProtKB-SubCell"/>
</dbReference>
<dbReference type="GO" id="GO:0005524">
    <property type="term" value="F:ATP binding"/>
    <property type="evidence" value="ECO:0007669"/>
    <property type="project" value="UniProtKB-UniRule"/>
</dbReference>
<dbReference type="GO" id="GO:0016887">
    <property type="term" value="F:ATP hydrolysis activity"/>
    <property type="evidence" value="ECO:0007669"/>
    <property type="project" value="InterPro"/>
</dbReference>
<dbReference type="GO" id="GO:0140662">
    <property type="term" value="F:ATP-dependent protein folding chaperone"/>
    <property type="evidence" value="ECO:0007669"/>
    <property type="project" value="InterPro"/>
</dbReference>
<dbReference type="GO" id="GO:0051082">
    <property type="term" value="F:unfolded protein binding"/>
    <property type="evidence" value="ECO:0007669"/>
    <property type="project" value="UniProtKB-UniRule"/>
</dbReference>
<dbReference type="CDD" id="cd16927">
    <property type="entry name" value="HATPase_Hsp90-like"/>
    <property type="match status" value="1"/>
</dbReference>
<dbReference type="FunFam" id="3.30.230.80:FF:000002">
    <property type="entry name" value="Molecular chaperone HtpG"/>
    <property type="match status" value="1"/>
</dbReference>
<dbReference type="FunFam" id="3.30.565.10:FF:000009">
    <property type="entry name" value="Molecular chaperone HtpG"/>
    <property type="match status" value="1"/>
</dbReference>
<dbReference type="Gene3D" id="3.30.230.80">
    <property type="match status" value="1"/>
</dbReference>
<dbReference type="Gene3D" id="3.40.50.11260">
    <property type="match status" value="1"/>
</dbReference>
<dbReference type="Gene3D" id="1.20.120.790">
    <property type="entry name" value="Heat shock protein 90, C-terminal domain"/>
    <property type="match status" value="1"/>
</dbReference>
<dbReference type="Gene3D" id="3.30.565.10">
    <property type="entry name" value="Histidine kinase-like ATPase, C-terminal domain"/>
    <property type="match status" value="1"/>
</dbReference>
<dbReference type="HAMAP" id="MF_00505">
    <property type="entry name" value="HSP90"/>
    <property type="match status" value="1"/>
</dbReference>
<dbReference type="InterPro" id="IPR036890">
    <property type="entry name" value="HATPase_C_sf"/>
</dbReference>
<dbReference type="InterPro" id="IPR019805">
    <property type="entry name" value="Heat_shock_protein_90_CS"/>
</dbReference>
<dbReference type="InterPro" id="IPR037196">
    <property type="entry name" value="HSP90_C"/>
</dbReference>
<dbReference type="InterPro" id="IPR001404">
    <property type="entry name" value="Hsp90_fam"/>
</dbReference>
<dbReference type="InterPro" id="IPR020575">
    <property type="entry name" value="Hsp90_N"/>
</dbReference>
<dbReference type="InterPro" id="IPR020568">
    <property type="entry name" value="Ribosomal_Su5_D2-typ_SF"/>
</dbReference>
<dbReference type="NCBIfam" id="NF003555">
    <property type="entry name" value="PRK05218.1"/>
    <property type="match status" value="1"/>
</dbReference>
<dbReference type="PANTHER" id="PTHR11528">
    <property type="entry name" value="HEAT SHOCK PROTEIN 90 FAMILY MEMBER"/>
    <property type="match status" value="1"/>
</dbReference>
<dbReference type="Pfam" id="PF13589">
    <property type="entry name" value="HATPase_c_3"/>
    <property type="match status" value="1"/>
</dbReference>
<dbReference type="Pfam" id="PF00183">
    <property type="entry name" value="HSP90"/>
    <property type="match status" value="1"/>
</dbReference>
<dbReference type="PIRSF" id="PIRSF002583">
    <property type="entry name" value="Hsp90"/>
    <property type="match status" value="1"/>
</dbReference>
<dbReference type="PRINTS" id="PR00775">
    <property type="entry name" value="HEATSHOCK90"/>
</dbReference>
<dbReference type="SMART" id="SM00387">
    <property type="entry name" value="HATPase_c"/>
    <property type="match status" value="1"/>
</dbReference>
<dbReference type="SUPFAM" id="SSF55874">
    <property type="entry name" value="ATPase domain of HSP90 chaperone/DNA topoisomerase II/histidine kinase"/>
    <property type="match status" value="1"/>
</dbReference>
<dbReference type="SUPFAM" id="SSF110942">
    <property type="entry name" value="HSP90 C-terminal domain"/>
    <property type="match status" value="1"/>
</dbReference>
<dbReference type="SUPFAM" id="SSF54211">
    <property type="entry name" value="Ribosomal protein S5 domain 2-like"/>
    <property type="match status" value="1"/>
</dbReference>
<dbReference type="PROSITE" id="PS00298">
    <property type="entry name" value="HSP90"/>
    <property type="match status" value="1"/>
</dbReference>
<accession>Q2SZZ0</accession>
<proteinExistence type="inferred from homology"/>
<sequence>MTQQTMSFQAEVKQLLHLMIHSLYSNKEIFLRELVSNASDAADKLRFEALENNALYESDPNLRIRLSFDKAARTLTIDDNGIGMSRDEAIANLGTIARSGTKEFFSKLSGDQQKDAALIGQFGVGFYSGFIVADKITVETRRAGLPASEGVRWESAGEGDFSVDTIERAARGTTITLHLREGEDELLSSYRLKSIVQKYSDHVALPILMKKEEWDQEKGEMVEKDEDETVNQASALWTRAKSDVTEEQYKQFYQHVAHDHQDPLAWTHNRVEGRSEYTQLLFVPSHAPFDLWNRDYRGGLKLYVKRVFIMDDAEQLLPQYLRFIKGVVDSSDLPLNVSREILQESRDVKAIREGVTKRALSMLEELANAEDDAGKEKYKTFWSAFGQVLKEGVGEDHANRERVAKLLRFASTHGDTDAQDVALADYVARMKPEQTKIYYVTADTWQAAKNSPHLEVFRKKGVEVLLLTDRVDEWMLSFLHEFDGKPLASVARGDLDLGALNDDEKKAQEETGEAMKPVVDKMKETLGGKVKDVRVTFRLTDSPSCLVADDNDMSGYLQRMLKAAGQNAPSFQPILEINPEHPLVKALKADGADFGDWCHLLFDQALLAEGGALEDPASFVKRTNALLLSRAA</sequence>
<feature type="chain" id="PRO_0000236988" description="Chaperone protein HtpG">
    <location>
        <begin position="1"/>
        <end position="632"/>
    </location>
</feature>
<feature type="region of interest" description="A; substrate-binding" evidence="1">
    <location>
        <begin position="1"/>
        <end position="339"/>
    </location>
</feature>
<feature type="region of interest" description="B" evidence="1">
    <location>
        <begin position="340"/>
        <end position="559"/>
    </location>
</feature>
<feature type="region of interest" description="C" evidence="1">
    <location>
        <begin position="560"/>
        <end position="632"/>
    </location>
</feature>